<comment type="subcellular location">
    <subcellularLocation>
        <location evidence="6">Membrane</location>
        <topology evidence="6">Single-pass type I membrane protein</topology>
    </subcellularLocation>
</comment>
<comment type="alternative products">
    <event type="alternative splicing"/>
    <isoform>
        <id>Q923L3-1</id>
        <name>1</name>
        <sequence type="displayed"/>
    </isoform>
    <isoform>
        <id>Q923L3-2</id>
        <name>2</name>
        <sequence type="described" ref="VSP_009037"/>
    </isoform>
    <isoform>
        <id>Q923L3-3</id>
        <name>3</name>
        <sequence type="described" ref="VSP_009036"/>
    </isoform>
</comment>
<comment type="similarity">
    <text evidence="6">Belongs to the CSMD family.</text>
</comment>
<comment type="sequence caution" evidence="6">
    <conflict type="erroneous initiation">
        <sequence resource="EMBL-CDS" id="BAC30095"/>
    </conflict>
</comment>
<sequence>MTAWRKFKSLLLPLVLAVLCAGLLTAAKGQNCGGLVQGPNGTIESPGFPHGYPNYANCTWIIITGERNRIQLSFHTFALEEDFDILSVYDGQPQQGNLKVRLSGFQLPSSIVSTGSLLTLWFTTDFAVSAQGFKAMYEVLPSHTCGNPGEILKGVLHGTRFNIGDKIRYSCLSGYILEGHAILTCIVSPGNGASWDFPAPFCRAEGACGGTLRGTSGSISSPHFPSEYDNNADCTWTILAEPGDTIALVFTDFQLEEGYDFLEISGTEAPSIWLTGMNLPSPVISSKNWLRLHFTSDSNHRRKGFNAQFQVKKAIELKSRGVKMLPSKDSSHKNSVLTQGGVSLISDMCPDPGIPDNGRRAGSDFRVGANVQFSCEDNYVLQGAKGITCQRVTETLAAWNDHRPICRARTCGSNLRGPSGVITSPNYPVQYEDNAHCVWVITTTDPDKVIKLAFEEFELERGYDTLTVGDAGKVGDTRSVLYVLTGSSVPDLIVSMSNQMWLHLQSDDSIGSPGFKAVYQEIEKGGCGDPGIPAYGKRTGSSFLHGDTLTFECQAAFELVGERVITCQKNNQWSGNKPSCVFSCFFNFTAPSGIILSPNYPEEYGNNMNCVWLIISEPGSRIHLIFNDFDVEPQFDFLAVKDDGISDITVLGTFSGNEVPAQLASSGHIVRLEFQSDHSTTGRGFNITYTTFGQNECHDPGIPVNGRRFGDRFLLGSSVSFHCDDGFVKTQGSESITCILQDGNVVWSSTVPRCEAPCGGHLTASSGVILPPGWPGYYKDSLNCEWVIEAKPGHSIKITFDRFQTEVNYDTLEVRDGPTSSSPLIGEYHGTQAPQFLISTGNYMYLLFTTDSSRASVGFLIHYESVTLESDSCLDPGIPVNGQRHGSNFGIRSTVTFSCDPGYTLSDDEPLVCEKNHQWNHALPSCDALCGGYIHGKSGTVLSPGFPDFYPNSLNCTWTIEVSHGKGVQMNFHTFHLESSHDYLLITEDGSFSEPVARLTGSVLPHTIKAGLFGNFTAQLRFISDFSISYEGFNITFAEYDLEPCDDPGVPAFSRRIGFQFGVGDTLAFTCFQGYRLEGATKLTCLGGGRRVWSAPLPRCVAECGASVKGNEGTLLSPNFPSHYDNNHECIYKIETEAGKGIHLRARTFQLFEGDTLKVYDGKDSSSRSLGVFTRSEFMGLVLNSTSNHLRLEFNTNGSDTAQGFQLTYTSFDLVKCEDPGIPNYGYRIRDDGHFTDTVVLYSCNPGYAMHGSSTLTCLSGDRRVWDKPMPSCVAECGGLVHAATSGRILSPGYPAPYDNNLHCTWTIEADPGKTISLHFIVFDTETAHDILKVWDGPVDSNILLKEWSGSALPEDIHSTFNSLTLQFDSDFFISKSGFSIQFSTSIASTCNDPGMPQNGTRYGDSREPGDTITFQCDPGYQLQGPAKITCVQLNNRFFWQPDPPSCIAACGGNLTGPAGVILSPNYPQPYPPGKECDWRIKVNPDFVIALIFKSFSMEPSYDFLHIYEGEDSNSPLIGSFQGSQAPERIESSGNSLFLAFRSDASVGLSGFAIEFKEKPREACFDPGNIMNGTRIGTDFKLGSTVTYQCDSGYKIVDPSSIECVTGADGKPSWDRALPACQAPCGGQYTGSEGVVLSPNYPHNYTAGQMCIYSITVPKEFVVFGQFAYFQTALNDLAELFDGTHPQARLLSSLSGSHSGETLPLATSNQILLRFSAKSGASARGFHFVYQAVPRTSDTQCSSVPEPRYGRRIGSEFSAGSIVRFECNPGYLLQGSTAIRCQSVPNALAQWNDTIPSCVVPCSGNFTQRRGTILSPGYPEPYGNNLNCVWKIIVSEGSGIQIQVISFATEQNWDSLEIHDGGDMTAPRLGSFSGTTVPALLNSTSNQLCLHFQSDISVAAAGFHLEYKTVGLAACQEPALPSNGIKIGDRYMVNDVLSFQCEPGYTLQGRSHISCMPGTVRRWNYPSPLCIATCGGTLTSMSGVILSPGFPGSYPNNLDCTWKISLPIGYGAHIQFLNFSTEANHDYLEIQNGPYHSSPMMGQFSGPDLPTSLLSTTHETLIRFYSDHSQNRQGFKLSYQAYELQNCPDPPAFQNGFMINSDYSVGQSISFECYPGYILLGHPVLTCQHGTDRNWNYPFPRCDAPCGYNVTSQNGTIYSPGFPDEYPILKDCLWLVTVPPGHGVYINFTLLQTEAVNDYIAVWDGPDQNSPQLGVFSGNTALETAYSSTNQVLLKFHSDFSNGGFFVLNFHAFQLKRCPPPPAVPQADLLTEDEDFEIGDFVKYQCHPGYTLLGSDTLTCKLSSQLLFQGSPPTCEAQCPANEVRTESSGVILSPGYPGNYFNSQTCAWSIKVEPNFNITLFVDTFQSEKQFDALEVFDGSSGQSPLLVVLSGNHTEQSNFTSRSNHLYLRWSTDHATSKKGFKIRYAAPYCSLTSTLRNGGILNKTAGAVGSKVHYFCKPGYRMIGHSNATCRRNPVGVYQWDSMAPLCQAVSCGIPEAPGNGSFTGNEFTLDSKVTYECNEGFKLDASQEATTVCQEDGLWSNRGKPPTCKPVPCPSIEGQLSEHVLWRLVSGSLNEYGAQVLLSCSPGYFLQGQRLLQCQANGTWSTEEDRPRCKVISCGSLSFPPNGNKIGTLTIYGATAIFTCNTGYTLVGSHVRECLANGLWSGSETRCLAGHCGSPDPIVNGHISGDGFSYRDTVVYQCNPGFRLVGTSVRICLQDHKWSGQTPVCVPITCGHPGNPAHGLTNGTEFNLNDLVNFTCHTGYRLQGASRAQCRSNGQWSSPLPICRVVNCSDPGSVENAVRHGQQNFPESFEYGTSVMYHCKTGFYLLGSSALTCMASGLWDRSLPKCLAISCGHPGVPANAVLTGELFTYGATVQYSCKGGQILTGNSTRVCQEDSHWSGSLPHCSGNSPGFCGDPGTPAHGSRLGDEFKTKSLLRFSCEMGHQLRGSAERTCLVNGSWSGVQPVCEAVSCGNPGTPTNGMILSSDGILFSSSVIYACWEGYKTSGLMTRHCTANGTWTGTAPDCTIISCGDPGTLPNGIQFGTDFTFNKTVSYQCNPGYLMEPPTSPTIRCTKDGTWNQSRPLCKAVLCNQPPPVPNGKVEGSDFRWGASISYSCVDGYQLSHSAILSCEGRGVWKGEVPQCLPVFCGDPGTPAEGRLSGKSFTFKSEVFIQCKPPFVLVGSSRRTCQADGIWSGIQPTCIDPAHTACPDPGTPHFGIQNSSKGYEVGSTVFFRCRKGYHIQGSTTRTCLANLTWSGIQTECIPHACRQPETPAHADVRAIDLPAFGYTLVYTCHPGFFLAGGSEHRTCKADMKWTGKSPVCKSKGVREVNETVTKTPVPSDVFFINSVWKGYYEYLGKRQPATLTVDWFNATSSKVNATFTAASRVQLELTGVYKKEEAHLLLKAFHIKGPADIFVSKFENDNWGLDGYVSSGLERGGFSFQGDIHGKDFGKFKLERQDPSNSDADSSNHYQGTSSGSVAAAILVPFFALILSGFAFYLYKHRTRPKVQYNGYAGHENSNGQASFENPMYDTNLKPTEAKAVRFDTTLNTVCTVV</sequence>
<name>CSMD1_MOUSE</name>
<feature type="signal peptide" evidence="2">
    <location>
        <begin position="1"/>
        <end position="29"/>
    </location>
</feature>
<feature type="chain" id="PRO_0000021026" description="CUB and sushi domain-containing protein 1">
    <location>
        <begin position="30"/>
        <end position="3564"/>
    </location>
</feature>
<feature type="topological domain" description="Extracellular" evidence="2">
    <location>
        <begin position="30"/>
        <end position="3487"/>
    </location>
</feature>
<feature type="transmembrane region" description="Helical" evidence="2">
    <location>
        <begin position="3488"/>
        <end position="3508"/>
    </location>
</feature>
<feature type="topological domain" description="Cytoplasmic" evidence="2">
    <location>
        <begin position="3509"/>
        <end position="3564"/>
    </location>
</feature>
<feature type="domain" description="CUB 1" evidence="3">
    <location>
        <begin position="32"/>
        <end position="140"/>
    </location>
</feature>
<feature type="domain" description="Sushi 1" evidence="4">
    <location>
        <begin position="143"/>
        <end position="204"/>
    </location>
</feature>
<feature type="domain" description="CUB 2" evidence="3">
    <location>
        <begin position="208"/>
        <end position="312"/>
    </location>
</feature>
<feature type="domain" description="Sushi 2" evidence="4">
    <location>
        <begin position="347"/>
        <end position="408"/>
    </location>
</feature>
<feature type="domain" description="CUB 3" evidence="3">
    <location>
        <begin position="411"/>
        <end position="522"/>
    </location>
</feature>
<feature type="domain" description="Sushi 3" evidence="4">
    <location>
        <begin position="525"/>
        <end position="582"/>
    </location>
</feature>
<feature type="domain" description="CUB 4" evidence="3">
    <location>
        <begin position="584"/>
        <end position="692"/>
    </location>
</feature>
<feature type="domain" description="Sushi 4" evidence="4">
    <location>
        <begin position="695"/>
        <end position="756"/>
    </location>
</feature>
<feature type="domain" description="CUB 5" evidence="3">
    <location>
        <begin position="758"/>
        <end position="866"/>
    </location>
</feature>
<feature type="domain" description="Sushi 5" evidence="4">
    <location>
        <begin position="871"/>
        <end position="928"/>
    </location>
</feature>
<feature type="domain" description="CUB 6" evidence="3">
    <location>
        <begin position="930"/>
        <end position="1040"/>
    </location>
</feature>
<feature type="domain" description="Sushi 6" evidence="4">
    <location>
        <begin position="1043"/>
        <end position="1102"/>
    </location>
</feature>
<feature type="domain" description="CUB 7" evidence="3">
    <location>
        <begin position="1104"/>
        <end position="1212"/>
    </location>
</feature>
<feature type="domain" description="Sushi 7" evidence="4">
    <location>
        <begin position="1215"/>
        <end position="1275"/>
    </location>
</feature>
<feature type="domain" description="CUB 8" evidence="3">
    <location>
        <begin position="1277"/>
        <end position="1386"/>
    </location>
</feature>
<feature type="domain" description="Sushi 8" evidence="4">
    <location>
        <begin position="1389"/>
        <end position="1449"/>
    </location>
</feature>
<feature type="domain" description="CUB 9" evidence="3">
    <location>
        <begin position="1451"/>
        <end position="1559"/>
    </location>
</feature>
<feature type="domain" description="Sushi 9" evidence="4">
    <location>
        <begin position="1562"/>
        <end position="1623"/>
    </location>
</feature>
<feature type="domain" description="CUB 10" evidence="3">
    <location>
        <begin position="1625"/>
        <end position="1733"/>
    </location>
</feature>
<feature type="domain" description="Sushi 10" evidence="4">
    <location>
        <begin position="1739"/>
        <end position="1800"/>
    </location>
</feature>
<feature type="domain" description="CUB 11" evidence="3">
    <location>
        <begin position="1802"/>
        <end position="1910"/>
    </location>
</feature>
<feature type="domain" description="Sushi 11" evidence="4">
    <location>
        <begin position="1913"/>
        <end position="1972"/>
    </location>
</feature>
<feature type="domain" description="CUB 12" evidence="3">
    <location>
        <begin position="1974"/>
        <end position="2082"/>
    </location>
</feature>
<feature type="domain" description="Sushi 12" evidence="4">
    <location>
        <begin position="2085"/>
        <end position="2144"/>
    </location>
</feature>
<feature type="domain" description="CUB 13" evidence="3">
    <location>
        <begin position="2146"/>
        <end position="2257"/>
    </location>
</feature>
<feature type="domain" description="Sushi 13" evidence="4">
    <location>
        <begin position="2256"/>
        <end position="2317"/>
    </location>
</feature>
<feature type="domain" description="CUB 14" evidence="3">
    <location>
        <begin position="2319"/>
        <end position="2430"/>
    </location>
</feature>
<feature type="domain" description="Sushi 14" evidence="4">
    <location>
        <begin position="2430"/>
        <end position="2492"/>
    </location>
</feature>
<feature type="domain" description="Sushi 15" evidence="4">
    <location>
        <begin position="2493"/>
        <end position="2554"/>
    </location>
</feature>
<feature type="domain" description="Sushi 16" evidence="4">
    <location>
        <begin position="2555"/>
        <end position="2619"/>
    </location>
</feature>
<feature type="domain" description="Sushi 17" evidence="4">
    <location>
        <begin position="2620"/>
        <end position="2677"/>
    </location>
</feature>
<feature type="domain" description="Sushi 18" evidence="4">
    <location>
        <begin position="2678"/>
        <end position="2735"/>
    </location>
</feature>
<feature type="domain" description="Sushi 19" evidence="4">
    <location>
        <begin position="2736"/>
        <end position="2793"/>
    </location>
</feature>
<feature type="domain" description="Sushi 20" evidence="4">
    <location>
        <begin position="2794"/>
        <end position="2856"/>
    </location>
</feature>
<feature type="domain" description="Sushi 21" evidence="4">
    <location>
        <begin position="2857"/>
        <end position="2914"/>
    </location>
</feature>
<feature type="domain" description="Sushi 22" evidence="4">
    <location>
        <begin position="2918"/>
        <end position="2975"/>
    </location>
</feature>
<feature type="domain" description="Sushi 23" evidence="4">
    <location>
        <begin position="2976"/>
        <end position="3034"/>
    </location>
</feature>
<feature type="domain" description="Sushi 24" evidence="4">
    <location>
        <begin position="3035"/>
        <end position="3094"/>
    </location>
</feature>
<feature type="domain" description="Sushi 25" evidence="4">
    <location>
        <begin position="3095"/>
        <end position="3152"/>
    </location>
</feature>
<feature type="domain" description="Sushi 26" evidence="4">
    <location>
        <begin position="3153"/>
        <end position="3210"/>
    </location>
</feature>
<feature type="domain" description="Sushi 27" evidence="4">
    <location>
        <begin position="3214"/>
        <end position="3272"/>
    </location>
</feature>
<feature type="domain" description="Sushi 28" evidence="4">
    <location>
        <begin position="3273"/>
        <end position="3332"/>
    </location>
</feature>
<feature type="glycosylation site" description="N-linked (GlcNAc...) asparagine" evidence="2">
    <location>
        <position position="40"/>
    </location>
</feature>
<feature type="glycosylation site" description="N-linked (GlcNAc...) asparagine" evidence="2">
    <location>
        <position position="57"/>
    </location>
</feature>
<feature type="glycosylation site" description="N-linked (GlcNAc...) asparagine" evidence="2">
    <location>
        <position position="587"/>
    </location>
</feature>
<feature type="glycosylation site" description="N-linked (GlcNAc...) asparagine" evidence="2">
    <location>
        <position position="686"/>
    </location>
</feature>
<feature type="glycosylation site" description="N-linked (GlcNAc...) asparagine" evidence="2">
    <location>
        <position position="955"/>
    </location>
</feature>
<feature type="glycosylation site" description="N-linked (GlcNAc...) asparagine" evidence="2">
    <location>
        <position position="1015"/>
    </location>
</feature>
<feature type="glycosylation site" description="N-linked (GlcNAc...) asparagine" evidence="2">
    <location>
        <position position="1034"/>
    </location>
</feature>
<feature type="glycosylation site" description="N-linked (GlcNAc...) asparagine" evidence="2">
    <location>
        <position position="1184"/>
    </location>
</feature>
<feature type="glycosylation site" description="N-linked (GlcNAc...) asparagine" evidence="2">
    <location>
        <position position="1197"/>
    </location>
</feature>
<feature type="glycosylation site" description="N-linked (GlcNAc...) asparagine" evidence="2">
    <location>
        <position position="1399"/>
    </location>
</feature>
<feature type="glycosylation site" description="N-linked (GlcNAc...) asparagine" evidence="2">
    <location>
        <position position="1454"/>
    </location>
</feature>
<feature type="glycosylation site" description="N-linked (GlcNAc...) asparagine" evidence="2">
    <location>
        <position position="1572"/>
    </location>
</feature>
<feature type="glycosylation site" description="N-linked (GlcNAc...) asparagine" evidence="2">
    <location>
        <position position="1644"/>
    </location>
</feature>
<feature type="glycosylation site" description="N-linked (GlcNAc...) asparagine" evidence="2">
    <location>
        <position position="1792"/>
    </location>
</feature>
<feature type="glycosylation site" description="N-linked (GlcNAc...) asparagine" evidence="2">
    <location>
        <position position="1805"/>
    </location>
</feature>
<feature type="glycosylation site" description="N-linked (GlcNAc...) asparagine" evidence="2">
    <location>
        <position position="1882"/>
    </location>
</feature>
<feature type="glycosylation site" description="N-linked (GlcNAc...) asparagine" evidence="2">
    <location>
        <position position="2018"/>
    </location>
</feature>
<feature type="glycosylation site" description="N-linked (GlcNAc...) asparagine" evidence="2">
    <location>
        <position position="2149"/>
    </location>
</feature>
<feature type="glycosylation site" description="N-linked (GlcNAc...) asparagine" evidence="2">
    <location>
        <position position="2154"/>
    </location>
</feature>
<feature type="glycosylation site" description="N-linked (GlcNAc...) asparagine" evidence="2">
    <location>
        <position position="2187"/>
    </location>
</feature>
<feature type="glycosylation site" description="N-linked (GlcNAc...) asparagine" evidence="2">
    <location>
        <position position="2358"/>
    </location>
</feature>
<feature type="glycosylation site" description="N-linked (GlcNAc...) asparagine" evidence="2">
    <location>
        <position position="2394"/>
    </location>
</feature>
<feature type="glycosylation site" description="N-linked (GlcNAc...) asparagine" evidence="2">
    <location>
        <position position="2400"/>
    </location>
</feature>
<feature type="glycosylation site" description="N-linked (GlcNAc...) asparagine" evidence="2">
    <location>
        <position position="2445"/>
    </location>
</feature>
<feature type="glycosylation site" description="N-linked (GlcNAc...) asparagine" evidence="2">
    <location>
        <position position="2470"/>
    </location>
</feature>
<feature type="glycosylation site" description="N-linked (GlcNAc...) asparagine" evidence="2">
    <location>
        <position position="2503"/>
    </location>
</feature>
<feature type="glycosylation site" description="N-linked (GlcNAc...) asparagine" evidence="2">
    <location>
        <position position="2605"/>
    </location>
</feature>
<feature type="glycosylation site" description="N-linked (GlcNAc...) asparagine" evidence="2">
    <location>
        <position position="2750"/>
    </location>
</feature>
<feature type="glycosylation site" description="N-linked (GlcNAc...) asparagine" evidence="2">
    <location>
        <position position="2761"/>
    </location>
</feature>
<feature type="glycosylation site" description="N-linked (GlcNAc...) asparagine" evidence="2">
    <location>
        <position position="2795"/>
    </location>
</feature>
<feature type="glycosylation site" description="N-linked (GlcNAc...) asparagine" evidence="2">
    <location>
        <position position="2894"/>
    </location>
</feature>
<feature type="glycosylation site" description="N-linked (GlcNAc...) asparagine" evidence="2">
    <location>
        <position position="2963"/>
    </location>
</feature>
<feature type="glycosylation site" description="N-linked (GlcNAc...) asparagine" evidence="2">
    <location>
        <position position="3022"/>
    </location>
</feature>
<feature type="glycosylation site" description="N-linked (GlcNAc...) asparagine" evidence="2">
    <location>
        <position position="3056"/>
    </location>
</feature>
<feature type="glycosylation site" description="N-linked (GlcNAc...) asparagine" evidence="2">
    <location>
        <position position="3086"/>
    </location>
</feature>
<feature type="glycosylation site" description="N-linked (GlcNAc...) asparagine" evidence="2">
    <location>
        <position position="3228"/>
    </location>
</feature>
<feature type="glycosylation site" description="N-linked (GlcNAc...) asparagine" evidence="2">
    <location>
        <position position="3260"/>
    </location>
</feature>
<feature type="glycosylation site" description="N-linked (GlcNAc...) asparagine" evidence="2">
    <location>
        <position position="3339"/>
    </location>
</feature>
<feature type="glycosylation site" description="N-linked (GlcNAc...) asparagine" evidence="2">
    <location>
        <position position="3379"/>
    </location>
</feature>
<feature type="glycosylation site" description="N-linked (GlcNAc...) asparagine" evidence="2">
    <location>
        <position position="3386"/>
    </location>
</feature>
<feature type="disulfide bond" evidence="1">
    <location>
        <begin position="32"/>
        <end position="58"/>
    </location>
</feature>
<feature type="disulfide bond" evidence="1">
    <location>
        <begin position="145"/>
        <end position="185"/>
    </location>
</feature>
<feature type="disulfide bond" evidence="1">
    <location>
        <begin position="171"/>
        <end position="202"/>
    </location>
</feature>
<feature type="disulfide bond" evidence="1">
    <location>
        <begin position="208"/>
        <end position="234"/>
    </location>
</feature>
<feature type="disulfide bond" evidence="1">
    <location>
        <begin position="349"/>
        <end position="389"/>
    </location>
</feature>
<feature type="disulfide bond" evidence="1">
    <location>
        <begin position="375"/>
        <end position="406"/>
    </location>
</feature>
<feature type="disulfide bond" evidence="1">
    <location>
        <begin position="411"/>
        <end position="437"/>
    </location>
</feature>
<feature type="disulfide bond" evidence="1">
    <location>
        <begin position="527"/>
        <end position="567"/>
    </location>
</feature>
<feature type="disulfide bond" evidence="1">
    <location>
        <begin position="553"/>
        <end position="580"/>
    </location>
</feature>
<feature type="disulfide bond" evidence="1">
    <location>
        <begin position="584"/>
        <end position="610"/>
    </location>
</feature>
<feature type="disulfide bond" evidence="1">
    <location>
        <begin position="697"/>
        <end position="738"/>
    </location>
</feature>
<feature type="disulfide bond" evidence="1">
    <location>
        <begin position="723"/>
        <end position="754"/>
    </location>
</feature>
<feature type="disulfide bond" evidence="1">
    <location>
        <begin position="758"/>
        <end position="784"/>
    </location>
</feature>
<feature type="disulfide bond" evidence="1">
    <location>
        <begin position="873"/>
        <end position="913"/>
    </location>
</feature>
<feature type="disulfide bond" evidence="1">
    <location>
        <begin position="899"/>
        <end position="926"/>
    </location>
</feature>
<feature type="disulfide bond" evidence="1">
    <location>
        <begin position="930"/>
        <end position="956"/>
    </location>
</feature>
<feature type="disulfide bond" evidence="1">
    <location>
        <begin position="1045"/>
        <end position="1085"/>
    </location>
</feature>
<feature type="disulfide bond" evidence="1">
    <location>
        <begin position="1071"/>
        <end position="1100"/>
    </location>
</feature>
<feature type="disulfide bond" evidence="1">
    <location>
        <begin position="1104"/>
        <end position="1130"/>
    </location>
</feature>
<feature type="disulfide bond" evidence="1">
    <location>
        <begin position="1217"/>
        <end position="1258"/>
    </location>
</feature>
<feature type="disulfide bond" evidence="1">
    <location>
        <begin position="1244"/>
        <end position="1273"/>
    </location>
</feature>
<feature type="disulfide bond" evidence="1">
    <location>
        <begin position="1277"/>
        <end position="1304"/>
    </location>
</feature>
<feature type="disulfide bond" evidence="1">
    <location>
        <begin position="1391"/>
        <end position="1431"/>
    </location>
</feature>
<feature type="disulfide bond" evidence="1">
    <location>
        <begin position="1417"/>
        <end position="1447"/>
    </location>
</feature>
<feature type="disulfide bond" evidence="1">
    <location>
        <begin position="1451"/>
        <end position="1477"/>
    </location>
</feature>
<feature type="disulfide bond" evidence="1">
    <location>
        <begin position="1564"/>
        <end position="1604"/>
    </location>
</feature>
<feature type="disulfide bond" evidence="1">
    <location>
        <begin position="1590"/>
        <end position="1621"/>
    </location>
</feature>
<feature type="disulfide bond" evidence="1">
    <location>
        <begin position="1625"/>
        <end position="1651"/>
    </location>
</feature>
<feature type="disulfide bond" evidence="1">
    <location>
        <begin position="1741"/>
        <end position="1781"/>
    </location>
</feature>
<feature type="disulfide bond" evidence="1">
    <location>
        <begin position="1767"/>
        <end position="1798"/>
    </location>
</feature>
<feature type="disulfide bond" evidence="1">
    <location>
        <begin position="1802"/>
        <end position="1828"/>
    </location>
</feature>
<feature type="disulfide bond" evidence="1">
    <location>
        <begin position="1915"/>
        <end position="1955"/>
    </location>
</feature>
<feature type="disulfide bond" evidence="1">
    <location>
        <begin position="1941"/>
        <end position="1970"/>
    </location>
</feature>
<feature type="disulfide bond" evidence="1">
    <location>
        <begin position="1974"/>
        <end position="2000"/>
    </location>
</feature>
<feature type="disulfide bond" evidence="1">
    <location>
        <begin position="2087"/>
        <end position="2127"/>
    </location>
</feature>
<feature type="disulfide bond" evidence="1">
    <location>
        <begin position="2113"/>
        <end position="2142"/>
    </location>
</feature>
<feature type="disulfide bond" evidence="1">
    <location>
        <begin position="2146"/>
        <end position="2172"/>
    </location>
</feature>
<feature type="disulfide bond" evidence="1">
    <location>
        <begin position="2258"/>
        <end position="2300"/>
    </location>
</feature>
<feature type="disulfide bond" evidence="1">
    <location>
        <begin position="2286"/>
        <end position="2315"/>
    </location>
</feature>
<feature type="disulfide bond" evidence="1">
    <location>
        <begin position="2319"/>
        <end position="2347"/>
    </location>
</feature>
<feature type="disulfide bond" evidence="1">
    <location>
        <begin position="2432"/>
        <end position="2473"/>
    </location>
</feature>
<feature type="disulfide bond" evidence="1">
    <location>
        <begin position="2459"/>
        <end position="2490"/>
    </location>
</feature>
<feature type="disulfide bond" evidence="1">
    <location>
        <begin position="2495"/>
        <end position="2537"/>
    </location>
</feature>
<feature type="disulfide bond" evidence="1">
    <location>
        <begin position="2521"/>
        <end position="2552"/>
    </location>
</feature>
<feature type="disulfide bond" evidence="1">
    <location>
        <begin position="2557"/>
        <end position="2602"/>
    </location>
</feature>
<feature type="disulfide bond" evidence="1">
    <location>
        <begin position="2588"/>
        <end position="2617"/>
    </location>
</feature>
<feature type="disulfide bond" evidence="1">
    <location>
        <begin position="2622"/>
        <end position="2662"/>
    </location>
</feature>
<feature type="disulfide bond" evidence="1">
    <location>
        <begin position="2648"/>
        <end position="2675"/>
    </location>
</feature>
<feature type="disulfide bond" evidence="1">
    <location>
        <begin position="2680"/>
        <end position="2720"/>
    </location>
</feature>
<feature type="disulfide bond" evidence="1">
    <location>
        <begin position="2706"/>
        <end position="2733"/>
    </location>
</feature>
<feature type="disulfide bond" evidence="1">
    <location>
        <begin position="2738"/>
        <end position="2778"/>
    </location>
</feature>
<feature type="disulfide bond" evidence="1">
    <location>
        <begin position="2764"/>
        <end position="2791"/>
    </location>
</feature>
<feature type="disulfide bond" evidence="1">
    <location>
        <begin position="2796"/>
        <end position="2841"/>
    </location>
</feature>
<feature type="disulfide bond" evidence="1">
    <location>
        <begin position="2827"/>
        <end position="2854"/>
    </location>
</feature>
<feature type="disulfide bond" evidence="1">
    <location>
        <begin position="2859"/>
        <end position="2899"/>
    </location>
</feature>
<feature type="disulfide bond" evidence="1">
    <location>
        <begin position="2885"/>
        <end position="2912"/>
    </location>
</feature>
<feature type="disulfide bond" evidence="1">
    <location>
        <begin position="2920"/>
        <end position="2960"/>
    </location>
</feature>
<feature type="disulfide bond" evidence="1">
    <location>
        <begin position="2946"/>
        <end position="2973"/>
    </location>
</feature>
<feature type="disulfide bond" evidence="1">
    <location>
        <begin position="2978"/>
        <end position="3019"/>
    </location>
</feature>
<feature type="disulfide bond" evidence="1">
    <location>
        <begin position="3005"/>
        <end position="3032"/>
    </location>
</feature>
<feature type="disulfide bond" evidence="1">
    <location>
        <begin position="3037"/>
        <end position="3079"/>
    </location>
</feature>
<feature type="disulfide bond" evidence="1">
    <location>
        <begin position="3063"/>
        <end position="3092"/>
    </location>
</feature>
<feature type="disulfide bond" evidence="1">
    <location>
        <begin position="3097"/>
        <end position="3137"/>
    </location>
</feature>
<feature type="disulfide bond" evidence="1">
    <location>
        <begin position="3123"/>
        <end position="3150"/>
    </location>
</feature>
<feature type="disulfide bond" evidence="1">
    <location>
        <begin position="3155"/>
        <end position="3195"/>
    </location>
</feature>
<feature type="disulfide bond" evidence="1">
    <location>
        <begin position="3181"/>
        <end position="3208"/>
    </location>
</feature>
<feature type="disulfide bond" evidence="1">
    <location>
        <begin position="3216"/>
        <end position="3257"/>
    </location>
</feature>
<feature type="disulfide bond" evidence="1">
    <location>
        <begin position="3243"/>
        <end position="3270"/>
    </location>
</feature>
<feature type="disulfide bond" evidence="1">
    <location>
        <begin position="3275"/>
        <end position="3317"/>
    </location>
</feature>
<feature type="disulfide bond" evidence="1">
    <location>
        <begin position="3302"/>
        <end position="3330"/>
    </location>
</feature>
<feature type="splice variant" id="VSP_009036" description="In isoform 3." evidence="5">
    <location>
        <begin position="102"/>
        <end position="3564"/>
    </location>
</feature>
<feature type="splice variant" id="VSP_009037" description="In isoform 2." evidence="5">
    <original>SKGVREVNETVTKTPV</original>
    <variation>I</variation>
    <location>
        <begin position="3332"/>
        <end position="3347"/>
    </location>
</feature>
<feature type="sequence conflict" description="In Ref. 1; AAG54083." evidence="6" ref="1">
    <original>N</original>
    <variation>K</variation>
    <location>
        <position position="627"/>
    </location>
</feature>
<feature type="sequence conflict" description="In Ref. 1; AAG54083." evidence="6" ref="1">
    <original>H</original>
    <variation>Y</variation>
    <location>
        <position position="1189"/>
    </location>
</feature>
<feature type="sequence conflict" description="In Ref. 1; AAG54083." evidence="6" ref="1">
    <original>I</original>
    <variation>V</variation>
    <location>
        <position position="1652"/>
    </location>
</feature>
<feature type="sequence conflict" description="In Ref. 1; AAG54083." evidence="6" ref="1">
    <original>L</original>
    <variation>P</variation>
    <location>
        <position position="2222"/>
    </location>
</feature>
<feature type="sequence conflict" description="In Ref. 1; AAG54083." evidence="6" ref="1">
    <original>E</original>
    <variation>K</variation>
    <location>
        <position position="2354"/>
    </location>
</feature>
<feature type="sequence conflict" description="In Ref. 1; AAG54083." evidence="6" ref="1">
    <original>Q</original>
    <variation>R</variation>
    <location>
        <position position="2384"/>
    </location>
</feature>
<feature type="sequence conflict" description="In Ref. 1; AAG54083." evidence="6" ref="1">
    <original>LQDHKWSGQTP</original>
    <variation>CRTTSGRGRLT</variation>
    <location>
        <begin position="2721"/>
        <end position="2731"/>
    </location>
</feature>
<feature type="sequence conflict" description="In Ref. 1; AAG54083." evidence="6" ref="1">
    <original>S</original>
    <variation>F</variation>
    <location>
        <position position="2955"/>
    </location>
</feature>
<organism>
    <name type="scientific">Mus musculus</name>
    <name type="common">Mouse</name>
    <dbReference type="NCBI Taxonomy" id="10090"/>
    <lineage>
        <taxon>Eukaryota</taxon>
        <taxon>Metazoa</taxon>
        <taxon>Chordata</taxon>
        <taxon>Craniata</taxon>
        <taxon>Vertebrata</taxon>
        <taxon>Euteleostomi</taxon>
        <taxon>Mammalia</taxon>
        <taxon>Eutheria</taxon>
        <taxon>Euarchontoglires</taxon>
        <taxon>Glires</taxon>
        <taxon>Rodentia</taxon>
        <taxon>Myomorpha</taxon>
        <taxon>Muroidea</taxon>
        <taxon>Muridae</taxon>
        <taxon>Murinae</taxon>
        <taxon>Mus</taxon>
        <taxon>Mus</taxon>
    </lineage>
</organism>
<accession>Q923L3</accession>
<accession>E9QK23</accession>
<accession>Q8BUV1</accession>
<accession>Q8BYQ3</accession>
<reference key="1">
    <citation type="journal article" date="2001" name="Genomics">
        <title>Transcript map of the 8p23 putative tumor suppressor region.</title>
        <authorList>
            <person name="Sun P.C."/>
            <person name="Uppaluri R."/>
            <person name="Schmidt A.P."/>
            <person name="Pashia M.E."/>
            <person name="Quant E.C."/>
            <person name="Sunwoo J.B."/>
            <person name="Gollin S.M."/>
            <person name="Scholnick S.B."/>
        </authorList>
    </citation>
    <scope>NUCLEOTIDE SEQUENCE [MRNA] (ISOFORM 1)</scope>
    <source>
        <strain>C57BL/6J</strain>
    </source>
</reference>
<reference key="2">
    <citation type="journal article" date="2005" name="Science">
        <title>The transcriptional landscape of the mammalian genome.</title>
        <authorList>
            <person name="Carninci P."/>
            <person name="Kasukawa T."/>
            <person name="Katayama S."/>
            <person name="Gough J."/>
            <person name="Frith M.C."/>
            <person name="Maeda N."/>
            <person name="Oyama R."/>
            <person name="Ravasi T."/>
            <person name="Lenhard B."/>
            <person name="Wells C."/>
            <person name="Kodzius R."/>
            <person name="Shimokawa K."/>
            <person name="Bajic V.B."/>
            <person name="Brenner S.E."/>
            <person name="Batalov S."/>
            <person name="Forrest A.R."/>
            <person name="Zavolan M."/>
            <person name="Davis M.J."/>
            <person name="Wilming L.G."/>
            <person name="Aidinis V."/>
            <person name="Allen J.E."/>
            <person name="Ambesi-Impiombato A."/>
            <person name="Apweiler R."/>
            <person name="Aturaliya R.N."/>
            <person name="Bailey T.L."/>
            <person name="Bansal M."/>
            <person name="Baxter L."/>
            <person name="Beisel K.W."/>
            <person name="Bersano T."/>
            <person name="Bono H."/>
            <person name="Chalk A.M."/>
            <person name="Chiu K.P."/>
            <person name="Choudhary V."/>
            <person name="Christoffels A."/>
            <person name="Clutterbuck D.R."/>
            <person name="Crowe M.L."/>
            <person name="Dalla E."/>
            <person name="Dalrymple B.P."/>
            <person name="de Bono B."/>
            <person name="Della Gatta G."/>
            <person name="di Bernardo D."/>
            <person name="Down T."/>
            <person name="Engstrom P."/>
            <person name="Fagiolini M."/>
            <person name="Faulkner G."/>
            <person name="Fletcher C.F."/>
            <person name="Fukushima T."/>
            <person name="Furuno M."/>
            <person name="Futaki S."/>
            <person name="Gariboldi M."/>
            <person name="Georgii-Hemming P."/>
            <person name="Gingeras T.R."/>
            <person name="Gojobori T."/>
            <person name="Green R.E."/>
            <person name="Gustincich S."/>
            <person name="Harbers M."/>
            <person name="Hayashi Y."/>
            <person name="Hensch T.K."/>
            <person name="Hirokawa N."/>
            <person name="Hill D."/>
            <person name="Huminiecki L."/>
            <person name="Iacono M."/>
            <person name="Ikeo K."/>
            <person name="Iwama A."/>
            <person name="Ishikawa T."/>
            <person name="Jakt M."/>
            <person name="Kanapin A."/>
            <person name="Katoh M."/>
            <person name="Kawasawa Y."/>
            <person name="Kelso J."/>
            <person name="Kitamura H."/>
            <person name="Kitano H."/>
            <person name="Kollias G."/>
            <person name="Krishnan S.P."/>
            <person name="Kruger A."/>
            <person name="Kummerfeld S.K."/>
            <person name="Kurochkin I.V."/>
            <person name="Lareau L.F."/>
            <person name="Lazarevic D."/>
            <person name="Lipovich L."/>
            <person name="Liu J."/>
            <person name="Liuni S."/>
            <person name="McWilliam S."/>
            <person name="Madan Babu M."/>
            <person name="Madera M."/>
            <person name="Marchionni L."/>
            <person name="Matsuda H."/>
            <person name="Matsuzawa S."/>
            <person name="Miki H."/>
            <person name="Mignone F."/>
            <person name="Miyake S."/>
            <person name="Morris K."/>
            <person name="Mottagui-Tabar S."/>
            <person name="Mulder N."/>
            <person name="Nakano N."/>
            <person name="Nakauchi H."/>
            <person name="Ng P."/>
            <person name="Nilsson R."/>
            <person name="Nishiguchi S."/>
            <person name="Nishikawa S."/>
            <person name="Nori F."/>
            <person name="Ohara O."/>
            <person name="Okazaki Y."/>
            <person name="Orlando V."/>
            <person name="Pang K.C."/>
            <person name="Pavan W.J."/>
            <person name="Pavesi G."/>
            <person name="Pesole G."/>
            <person name="Petrovsky N."/>
            <person name="Piazza S."/>
            <person name="Reed J."/>
            <person name="Reid J.F."/>
            <person name="Ring B.Z."/>
            <person name="Ringwald M."/>
            <person name="Rost B."/>
            <person name="Ruan Y."/>
            <person name="Salzberg S.L."/>
            <person name="Sandelin A."/>
            <person name="Schneider C."/>
            <person name="Schoenbach C."/>
            <person name="Sekiguchi K."/>
            <person name="Semple C.A."/>
            <person name="Seno S."/>
            <person name="Sessa L."/>
            <person name="Sheng Y."/>
            <person name="Shibata Y."/>
            <person name="Shimada H."/>
            <person name="Shimada K."/>
            <person name="Silva D."/>
            <person name="Sinclair B."/>
            <person name="Sperling S."/>
            <person name="Stupka E."/>
            <person name="Sugiura K."/>
            <person name="Sultana R."/>
            <person name="Takenaka Y."/>
            <person name="Taki K."/>
            <person name="Tammoja K."/>
            <person name="Tan S.L."/>
            <person name="Tang S."/>
            <person name="Taylor M.S."/>
            <person name="Tegner J."/>
            <person name="Teichmann S.A."/>
            <person name="Ueda H.R."/>
            <person name="van Nimwegen E."/>
            <person name="Verardo R."/>
            <person name="Wei C.L."/>
            <person name="Yagi K."/>
            <person name="Yamanishi H."/>
            <person name="Zabarovsky E."/>
            <person name="Zhu S."/>
            <person name="Zimmer A."/>
            <person name="Hide W."/>
            <person name="Bult C."/>
            <person name="Grimmond S.M."/>
            <person name="Teasdale R.D."/>
            <person name="Liu E.T."/>
            <person name="Brusic V."/>
            <person name="Quackenbush J."/>
            <person name="Wahlestedt C."/>
            <person name="Mattick J.S."/>
            <person name="Hume D.A."/>
            <person name="Kai C."/>
            <person name="Sasaki D."/>
            <person name="Tomaru Y."/>
            <person name="Fukuda S."/>
            <person name="Kanamori-Katayama M."/>
            <person name="Suzuki M."/>
            <person name="Aoki J."/>
            <person name="Arakawa T."/>
            <person name="Iida J."/>
            <person name="Imamura K."/>
            <person name="Itoh M."/>
            <person name="Kato T."/>
            <person name="Kawaji H."/>
            <person name="Kawagashira N."/>
            <person name="Kawashima T."/>
            <person name="Kojima M."/>
            <person name="Kondo S."/>
            <person name="Konno H."/>
            <person name="Nakano K."/>
            <person name="Ninomiya N."/>
            <person name="Nishio T."/>
            <person name="Okada M."/>
            <person name="Plessy C."/>
            <person name="Shibata K."/>
            <person name="Shiraki T."/>
            <person name="Suzuki S."/>
            <person name="Tagami M."/>
            <person name="Waki K."/>
            <person name="Watahiki A."/>
            <person name="Okamura-Oho Y."/>
            <person name="Suzuki H."/>
            <person name="Kawai J."/>
            <person name="Hayashizaki Y."/>
        </authorList>
    </citation>
    <scope>NUCLEOTIDE SEQUENCE [LARGE SCALE MRNA] (ISOFORM 3)</scope>
    <scope>NUCLEOTIDE SEQUENCE [LARGE SCALE MRNA] OF 3250-3564 (ISOFORM 2)</scope>
    <source>
        <strain>C57BL/6J</strain>
        <tissue>Cerebellum</tissue>
        <tissue>Hypothalamus</tissue>
    </source>
</reference>
<reference key="3">
    <citation type="journal article" date="2009" name="PLoS Biol.">
        <title>Lineage-specific biology revealed by a finished genome assembly of the mouse.</title>
        <authorList>
            <person name="Church D.M."/>
            <person name="Goodstadt L."/>
            <person name="Hillier L.W."/>
            <person name="Zody M.C."/>
            <person name="Goldstein S."/>
            <person name="She X."/>
            <person name="Bult C.J."/>
            <person name="Agarwala R."/>
            <person name="Cherry J.L."/>
            <person name="DiCuccio M."/>
            <person name="Hlavina W."/>
            <person name="Kapustin Y."/>
            <person name="Meric P."/>
            <person name="Maglott D."/>
            <person name="Birtle Z."/>
            <person name="Marques A.C."/>
            <person name="Graves T."/>
            <person name="Zhou S."/>
            <person name="Teague B."/>
            <person name="Potamousis K."/>
            <person name="Churas C."/>
            <person name="Place M."/>
            <person name="Herschleb J."/>
            <person name="Runnheim R."/>
            <person name="Forrest D."/>
            <person name="Amos-Landgraf J."/>
            <person name="Schwartz D.C."/>
            <person name="Cheng Z."/>
            <person name="Lindblad-Toh K."/>
            <person name="Eichler E.E."/>
            <person name="Ponting C.P."/>
        </authorList>
    </citation>
    <scope>NUCLEOTIDE SEQUENCE [LARGE SCALE GENOMIC DNA]</scope>
    <source>
        <strain>C57BL/6J</strain>
    </source>
</reference>
<reference key="4">
    <citation type="journal article" date="2010" name="Cell">
        <title>A tissue-specific atlas of mouse protein phosphorylation and expression.</title>
        <authorList>
            <person name="Huttlin E.L."/>
            <person name="Jedrychowski M.P."/>
            <person name="Elias J.E."/>
            <person name="Goswami T."/>
            <person name="Rad R."/>
            <person name="Beausoleil S.A."/>
            <person name="Villen J."/>
            <person name="Haas W."/>
            <person name="Sowa M.E."/>
            <person name="Gygi S.P."/>
        </authorList>
    </citation>
    <scope>IDENTIFICATION BY MASS SPECTROMETRY [LARGE SCALE ANALYSIS]</scope>
    <source>
        <tissue>Brain</tissue>
    </source>
</reference>
<gene>
    <name type="primary">Csmd1</name>
</gene>
<keyword id="KW-0025">Alternative splicing</keyword>
<keyword id="KW-1015">Disulfide bond</keyword>
<keyword id="KW-0325">Glycoprotein</keyword>
<keyword id="KW-0472">Membrane</keyword>
<keyword id="KW-1185">Reference proteome</keyword>
<keyword id="KW-0677">Repeat</keyword>
<keyword id="KW-0732">Signal</keyword>
<keyword id="KW-0768">Sushi</keyword>
<keyword id="KW-0812">Transmembrane</keyword>
<keyword id="KW-1133">Transmembrane helix</keyword>
<dbReference type="EMBL" id="AY017475">
    <property type="protein sequence ID" value="AAG54083.1"/>
    <property type="molecule type" value="mRNA"/>
</dbReference>
<dbReference type="EMBL" id="AK038679">
    <property type="protein sequence ID" value="BAC30095.1"/>
    <property type="status" value="ALT_INIT"/>
    <property type="molecule type" value="mRNA"/>
</dbReference>
<dbReference type="EMBL" id="AK082377">
    <property type="protein sequence ID" value="BAC38482.1"/>
    <property type="molecule type" value="mRNA"/>
</dbReference>
<dbReference type="EMBL" id="AC101229">
    <property type="status" value="NOT_ANNOTATED_CDS"/>
    <property type="molecule type" value="Genomic_DNA"/>
</dbReference>
<dbReference type="EMBL" id="AC122323">
    <property type="status" value="NOT_ANNOTATED_CDS"/>
    <property type="molecule type" value="Genomic_DNA"/>
</dbReference>
<dbReference type="EMBL" id="AC122839">
    <property type="status" value="NOT_ANNOTATED_CDS"/>
    <property type="molecule type" value="Genomic_DNA"/>
</dbReference>
<dbReference type="EMBL" id="AC122911">
    <property type="status" value="NOT_ANNOTATED_CDS"/>
    <property type="molecule type" value="Genomic_DNA"/>
</dbReference>
<dbReference type="EMBL" id="AC123819">
    <property type="status" value="NOT_ANNOTATED_CDS"/>
    <property type="molecule type" value="Genomic_DNA"/>
</dbReference>
<dbReference type="EMBL" id="AC123866">
    <property type="status" value="NOT_ANNOTATED_CDS"/>
    <property type="molecule type" value="Genomic_DNA"/>
</dbReference>
<dbReference type="EMBL" id="AC123984">
    <property type="status" value="NOT_ANNOTATED_CDS"/>
    <property type="molecule type" value="Genomic_DNA"/>
</dbReference>
<dbReference type="EMBL" id="AC124351">
    <property type="status" value="NOT_ANNOTATED_CDS"/>
    <property type="molecule type" value="Genomic_DNA"/>
</dbReference>
<dbReference type="EMBL" id="AC125132">
    <property type="status" value="NOT_ANNOTATED_CDS"/>
    <property type="molecule type" value="Genomic_DNA"/>
</dbReference>
<dbReference type="EMBL" id="AC125354">
    <property type="status" value="NOT_ANNOTATED_CDS"/>
    <property type="molecule type" value="Genomic_DNA"/>
</dbReference>
<dbReference type="EMBL" id="AC132578">
    <property type="status" value="NOT_ANNOTATED_CDS"/>
    <property type="molecule type" value="Genomic_DNA"/>
</dbReference>
<dbReference type="EMBL" id="AC144939">
    <property type="status" value="NOT_ANNOTATED_CDS"/>
    <property type="molecule type" value="Genomic_DNA"/>
</dbReference>
<dbReference type="EMBL" id="AC154107">
    <property type="status" value="NOT_ANNOTATED_CDS"/>
    <property type="molecule type" value="Genomic_DNA"/>
</dbReference>
<dbReference type="CCDS" id="CCDS40244.1">
    <molecule id="Q923L3-1"/>
</dbReference>
<dbReference type="RefSeq" id="NP_444401.2">
    <molecule id="Q923L3-1"/>
    <property type="nucleotide sequence ID" value="NM_053171.2"/>
</dbReference>
<dbReference type="SMR" id="Q923L3"/>
<dbReference type="FunCoup" id="Q923L3">
    <property type="interactions" value="65"/>
</dbReference>
<dbReference type="STRING" id="10090.ENSMUSP00000080751"/>
<dbReference type="GlyConnect" id="2241">
    <property type="glycosylation" value="6 N-Linked glycans (9 sites)"/>
</dbReference>
<dbReference type="GlyCosmos" id="Q923L3">
    <property type="glycosylation" value="40 sites, 6 glycans"/>
</dbReference>
<dbReference type="GlyGen" id="Q923L3">
    <property type="glycosylation" value="44 sites, 17 N-linked glycans (16 sites), 1 O-linked glycan (1 site)"/>
</dbReference>
<dbReference type="iPTMnet" id="Q923L3"/>
<dbReference type="PhosphoSitePlus" id="Q923L3"/>
<dbReference type="PaxDb" id="10090-ENSMUSP00000080751"/>
<dbReference type="PeptideAtlas" id="Q923L3"/>
<dbReference type="ProteomicsDB" id="285323">
    <molecule id="Q923L3-1"/>
</dbReference>
<dbReference type="ProteomicsDB" id="285324">
    <molecule id="Q923L3-2"/>
</dbReference>
<dbReference type="Antibodypedia" id="52810">
    <property type="antibodies" value="87 antibodies from 22 providers"/>
</dbReference>
<dbReference type="DNASU" id="94109"/>
<dbReference type="Ensembl" id="ENSMUST00000082104.7">
    <molecule id="Q923L3-1"/>
    <property type="protein sequence ID" value="ENSMUSP00000080751.7"/>
    <property type="gene ID" value="ENSMUSG00000060924.16"/>
</dbReference>
<dbReference type="GeneID" id="94109"/>
<dbReference type="KEGG" id="mmu:94109"/>
<dbReference type="UCSC" id="uc009kzp.1">
    <molecule id="Q923L3-1"/>
    <property type="organism name" value="mouse"/>
</dbReference>
<dbReference type="UCSC" id="uc009kzr.1">
    <molecule id="Q923L3-3"/>
    <property type="organism name" value="mouse"/>
</dbReference>
<dbReference type="AGR" id="MGI:2137383"/>
<dbReference type="CTD" id="64478"/>
<dbReference type="MGI" id="MGI:2137383">
    <property type="gene designation" value="Csmd1"/>
</dbReference>
<dbReference type="VEuPathDB" id="HostDB:ENSMUSG00000060924"/>
<dbReference type="eggNOG" id="KOG4297">
    <property type="taxonomic scope" value="Eukaryota"/>
</dbReference>
<dbReference type="GeneTree" id="ENSGT00940000155701"/>
<dbReference type="HOGENOM" id="CLU_000277_0_0_1"/>
<dbReference type="InParanoid" id="Q923L3"/>
<dbReference type="OMA" id="DLVNFTC"/>
<dbReference type="OrthoDB" id="5804959at2759"/>
<dbReference type="PhylomeDB" id="Q923L3"/>
<dbReference type="TreeFam" id="TF316872"/>
<dbReference type="BioGRID-ORCS" id="94109">
    <property type="hits" value="2 hits in 78 CRISPR screens"/>
</dbReference>
<dbReference type="ChiTaRS" id="Csmd1">
    <property type="organism name" value="mouse"/>
</dbReference>
<dbReference type="PRO" id="PR:Q923L3"/>
<dbReference type="Proteomes" id="UP000000589">
    <property type="component" value="Chromosome 8"/>
</dbReference>
<dbReference type="RNAct" id="Q923L3">
    <property type="molecule type" value="protein"/>
</dbReference>
<dbReference type="Bgee" id="ENSMUSG00000060924">
    <property type="expression patterns" value="Expressed in lumbar dorsal root ganglion and 65 other cell types or tissues"/>
</dbReference>
<dbReference type="GO" id="GO:0016020">
    <property type="term" value="C:membrane"/>
    <property type="evidence" value="ECO:0007669"/>
    <property type="project" value="UniProtKB-SubCell"/>
</dbReference>
<dbReference type="GO" id="GO:1990708">
    <property type="term" value="P:conditioned place preference"/>
    <property type="evidence" value="ECO:0000315"/>
    <property type="project" value="MGI"/>
</dbReference>
<dbReference type="GO" id="GO:0008585">
    <property type="term" value="P:female gonad development"/>
    <property type="evidence" value="ECO:0000315"/>
    <property type="project" value="MGI"/>
</dbReference>
<dbReference type="GO" id="GO:0010467">
    <property type="term" value="P:gene expression"/>
    <property type="evidence" value="ECO:0000315"/>
    <property type="project" value="MGI"/>
</dbReference>
<dbReference type="GO" id="GO:0042593">
    <property type="term" value="P:glucose homeostasis"/>
    <property type="evidence" value="ECO:0000315"/>
    <property type="project" value="MGI"/>
</dbReference>
<dbReference type="GO" id="GO:0008584">
    <property type="term" value="P:male gonad development"/>
    <property type="evidence" value="ECO:0000315"/>
    <property type="project" value="MGI"/>
</dbReference>
<dbReference type="GO" id="GO:0060745">
    <property type="term" value="P:mammary gland branching involved in pregnancy"/>
    <property type="evidence" value="ECO:0000315"/>
    <property type="project" value="MGI"/>
</dbReference>
<dbReference type="GO" id="GO:0030879">
    <property type="term" value="P:mammary gland development"/>
    <property type="evidence" value="ECO:0000315"/>
    <property type="project" value="MGI"/>
</dbReference>
<dbReference type="GO" id="GO:0060603">
    <property type="term" value="P:mammary gland duct morphogenesis"/>
    <property type="evidence" value="ECO:0000315"/>
    <property type="project" value="MGI"/>
</dbReference>
<dbReference type="GO" id="GO:0007613">
    <property type="term" value="P:memory"/>
    <property type="evidence" value="ECO:0000315"/>
    <property type="project" value="MGI"/>
</dbReference>
<dbReference type="GO" id="GO:0035846">
    <property type="term" value="P:oviduct epithelium development"/>
    <property type="evidence" value="ECO:0000316"/>
    <property type="project" value="MGI"/>
</dbReference>
<dbReference type="GO" id="GO:0001964">
    <property type="term" value="P:startle response"/>
    <property type="evidence" value="ECO:0000315"/>
    <property type="project" value="MGI"/>
</dbReference>
<dbReference type="CDD" id="cd00033">
    <property type="entry name" value="CCP"/>
    <property type="match status" value="28"/>
</dbReference>
<dbReference type="CDD" id="cd00041">
    <property type="entry name" value="CUB"/>
    <property type="match status" value="14"/>
</dbReference>
<dbReference type="FunFam" id="2.10.70.10:FF:000011">
    <property type="entry name" value="CUB and sushi domain-containing protein 3 isoform A"/>
    <property type="match status" value="5"/>
</dbReference>
<dbReference type="FunFam" id="2.60.120.290:FF:000001">
    <property type="entry name" value="CUB and sushi domain-containing protein 3 isoform X1"/>
    <property type="match status" value="13"/>
</dbReference>
<dbReference type="FunFam" id="2.10.70.10:FF:000002">
    <property type="entry name" value="CUB and Sushi multiple domains 3"/>
    <property type="match status" value="10"/>
</dbReference>
<dbReference type="FunFam" id="2.10.70.10:FF:000047">
    <property type="entry name" value="CUB and Sushi multiple domains 3"/>
    <property type="match status" value="1"/>
</dbReference>
<dbReference type="Gene3D" id="2.10.70.10">
    <property type="entry name" value="Complement Module, domain 1"/>
    <property type="match status" value="28"/>
</dbReference>
<dbReference type="Gene3D" id="2.60.120.290">
    <property type="entry name" value="Spermadhesin, CUB domain"/>
    <property type="match status" value="14"/>
</dbReference>
<dbReference type="InterPro" id="IPR000859">
    <property type="entry name" value="CUB_dom"/>
</dbReference>
<dbReference type="InterPro" id="IPR051277">
    <property type="entry name" value="SEZ6_CSMD_C4BPB_Regulators"/>
</dbReference>
<dbReference type="InterPro" id="IPR035914">
    <property type="entry name" value="Sperma_CUB_dom_sf"/>
</dbReference>
<dbReference type="InterPro" id="IPR035976">
    <property type="entry name" value="Sushi/SCR/CCP_sf"/>
</dbReference>
<dbReference type="InterPro" id="IPR000436">
    <property type="entry name" value="Sushi_SCR_CCP_dom"/>
</dbReference>
<dbReference type="PANTHER" id="PTHR45656">
    <property type="entry name" value="PROTEIN CBR-CLEC-78"/>
    <property type="match status" value="1"/>
</dbReference>
<dbReference type="PANTHER" id="PTHR45656:SF4">
    <property type="entry name" value="PROTEIN CBR-CLEC-78"/>
    <property type="match status" value="1"/>
</dbReference>
<dbReference type="Pfam" id="PF00431">
    <property type="entry name" value="CUB"/>
    <property type="match status" value="14"/>
</dbReference>
<dbReference type="Pfam" id="PF00084">
    <property type="entry name" value="Sushi"/>
    <property type="match status" value="28"/>
</dbReference>
<dbReference type="SMART" id="SM00032">
    <property type="entry name" value="CCP"/>
    <property type="match status" value="28"/>
</dbReference>
<dbReference type="SMART" id="SM00042">
    <property type="entry name" value="CUB"/>
    <property type="match status" value="14"/>
</dbReference>
<dbReference type="SUPFAM" id="SSF57535">
    <property type="entry name" value="Complement control module/SCR domain"/>
    <property type="match status" value="28"/>
</dbReference>
<dbReference type="SUPFAM" id="SSF49854">
    <property type="entry name" value="Spermadhesin, CUB domain"/>
    <property type="match status" value="14"/>
</dbReference>
<dbReference type="PROSITE" id="PS01180">
    <property type="entry name" value="CUB"/>
    <property type="match status" value="14"/>
</dbReference>
<dbReference type="PROSITE" id="PS50923">
    <property type="entry name" value="SUSHI"/>
    <property type="match status" value="28"/>
</dbReference>
<proteinExistence type="evidence at protein level"/>
<protein>
    <recommendedName>
        <fullName>CUB and sushi domain-containing protein 1</fullName>
    </recommendedName>
    <alternativeName>
        <fullName>CUB and sushi multiple domains protein 1</fullName>
    </alternativeName>
</protein>
<evidence type="ECO:0000250" key="1"/>
<evidence type="ECO:0000255" key="2"/>
<evidence type="ECO:0000255" key="3">
    <source>
        <dbReference type="PROSITE-ProRule" id="PRU00059"/>
    </source>
</evidence>
<evidence type="ECO:0000255" key="4">
    <source>
        <dbReference type="PROSITE-ProRule" id="PRU00302"/>
    </source>
</evidence>
<evidence type="ECO:0000303" key="5">
    <source>
    </source>
</evidence>
<evidence type="ECO:0000305" key="6"/>